<name>MNMA1_THEP3</name>
<evidence type="ECO:0000255" key="1">
    <source>
        <dbReference type="HAMAP-Rule" id="MF_00144"/>
    </source>
</evidence>
<evidence type="ECO:0000305" key="2"/>
<organism>
    <name type="scientific">Thermoanaerobacter pseudethanolicus (strain ATCC 33223 / 39E)</name>
    <name type="common">Clostridium thermohydrosulfuricum</name>
    <dbReference type="NCBI Taxonomy" id="340099"/>
    <lineage>
        <taxon>Bacteria</taxon>
        <taxon>Bacillati</taxon>
        <taxon>Bacillota</taxon>
        <taxon>Clostridia</taxon>
        <taxon>Thermoanaerobacterales</taxon>
        <taxon>Thermoanaerobacteraceae</taxon>
        <taxon>Thermoanaerobacter</taxon>
    </lineage>
</organism>
<reference key="1">
    <citation type="submission" date="2008-01" db="EMBL/GenBank/DDBJ databases">
        <title>Complete sequence of Thermoanaerobacter pseudethanolicus 39E.</title>
        <authorList>
            <person name="Copeland A."/>
            <person name="Lucas S."/>
            <person name="Lapidus A."/>
            <person name="Barry K."/>
            <person name="Glavina del Rio T."/>
            <person name="Dalin E."/>
            <person name="Tice H."/>
            <person name="Pitluck S."/>
            <person name="Bruce D."/>
            <person name="Goodwin L."/>
            <person name="Saunders E."/>
            <person name="Brettin T."/>
            <person name="Detter J.C."/>
            <person name="Han C."/>
            <person name="Schmutz J."/>
            <person name="Larimer F."/>
            <person name="Land M."/>
            <person name="Hauser L."/>
            <person name="Kyrpides N."/>
            <person name="Lykidis A."/>
            <person name="Hemme C."/>
            <person name="Fields M.W."/>
            <person name="He Z."/>
            <person name="Zhou J."/>
            <person name="Richardson P."/>
        </authorList>
    </citation>
    <scope>NUCLEOTIDE SEQUENCE [LARGE SCALE GENOMIC DNA]</scope>
    <source>
        <strain>ATCC 33223 / DSM 2355 / 39E</strain>
    </source>
</reference>
<gene>
    <name evidence="1" type="primary">mnmA1</name>
    <name type="ordered locus">Teth39_0281</name>
</gene>
<keyword id="KW-0067">ATP-binding</keyword>
<keyword id="KW-0963">Cytoplasm</keyword>
<keyword id="KW-1015">Disulfide bond</keyword>
<keyword id="KW-0547">Nucleotide-binding</keyword>
<keyword id="KW-1185">Reference proteome</keyword>
<keyword id="KW-0694">RNA-binding</keyword>
<keyword id="KW-0808">Transferase</keyword>
<keyword id="KW-0819">tRNA processing</keyword>
<keyword id="KW-0820">tRNA-binding</keyword>
<protein>
    <recommendedName>
        <fullName evidence="1">tRNA-specific 2-thiouridylase MnmA 1</fullName>
        <ecNumber evidence="1">2.8.1.13</ecNumber>
    </recommendedName>
</protein>
<sequence length="364" mass="41541">MKKNNRVVVGMSGGVDSSVSAYLLKEQGFDVIGVTMQIWQDKDEEAVRVEGGCCSLSAVNDARRVANKIGIKYYVMNFKDVFKEKVIDYFVDEYLKGRTPNPCIACNKYIKFEELLKRAWMIDAYYVATGHYAIKEYDEERGRYLLKKSVDTSKDQTYVLYNLTQTQLEHILFPLGKYKKDEVRELAKNLGLPVASKPDSQEICFVTDNDYGKFIRENAKEEIKPGEFRDTRGRFLGYHKGIIHYTIGQRKGLGISVGKPLYVVDIDAENNVVVLGYGDEVFGDELISYNNNFISIDKLEREMRVKAKIRYNAKEQDAVIRPLEDGKVFVKFDNPQRAITPGQSVVFYEGDIVVGGGTIERKVR</sequence>
<comment type="function">
    <text evidence="1">Catalyzes the 2-thiolation of uridine at the wobble position (U34) of tRNA, leading to the formation of s(2)U34.</text>
</comment>
<comment type="catalytic activity">
    <reaction evidence="1">
        <text>S-sulfanyl-L-cysteinyl-[protein] + uridine(34) in tRNA + AH2 + ATP = 2-thiouridine(34) in tRNA + L-cysteinyl-[protein] + A + AMP + diphosphate + H(+)</text>
        <dbReference type="Rhea" id="RHEA:47032"/>
        <dbReference type="Rhea" id="RHEA-COMP:10131"/>
        <dbReference type="Rhea" id="RHEA-COMP:11726"/>
        <dbReference type="Rhea" id="RHEA-COMP:11727"/>
        <dbReference type="Rhea" id="RHEA-COMP:11728"/>
        <dbReference type="ChEBI" id="CHEBI:13193"/>
        <dbReference type="ChEBI" id="CHEBI:15378"/>
        <dbReference type="ChEBI" id="CHEBI:17499"/>
        <dbReference type="ChEBI" id="CHEBI:29950"/>
        <dbReference type="ChEBI" id="CHEBI:30616"/>
        <dbReference type="ChEBI" id="CHEBI:33019"/>
        <dbReference type="ChEBI" id="CHEBI:61963"/>
        <dbReference type="ChEBI" id="CHEBI:65315"/>
        <dbReference type="ChEBI" id="CHEBI:87170"/>
        <dbReference type="ChEBI" id="CHEBI:456215"/>
        <dbReference type="EC" id="2.8.1.13"/>
    </reaction>
</comment>
<comment type="subcellular location">
    <subcellularLocation>
        <location evidence="1">Cytoplasm</location>
    </subcellularLocation>
</comment>
<comment type="similarity">
    <text evidence="1">Belongs to the MnmA/TRMU family.</text>
</comment>
<comment type="sequence caution" evidence="2">
    <conflict type="erroneous initiation">
        <sequence resource="EMBL-CDS" id="ABY93950"/>
    </conflict>
</comment>
<proteinExistence type="inferred from homology"/>
<accession>B0KC14</accession>
<dbReference type="EC" id="2.8.1.13" evidence="1"/>
<dbReference type="EMBL" id="CP000924">
    <property type="protein sequence ID" value="ABY93950.1"/>
    <property type="status" value="ALT_INIT"/>
    <property type="molecule type" value="Genomic_DNA"/>
</dbReference>
<dbReference type="SMR" id="B0KC14"/>
<dbReference type="STRING" id="340099.Teth39_0281"/>
<dbReference type="KEGG" id="tpd:Teth39_0281"/>
<dbReference type="eggNOG" id="COG0482">
    <property type="taxonomic scope" value="Bacteria"/>
</dbReference>
<dbReference type="HOGENOM" id="CLU_035188_0_0_9"/>
<dbReference type="Proteomes" id="UP000002156">
    <property type="component" value="Chromosome"/>
</dbReference>
<dbReference type="GO" id="GO:0005737">
    <property type="term" value="C:cytoplasm"/>
    <property type="evidence" value="ECO:0007669"/>
    <property type="project" value="UniProtKB-SubCell"/>
</dbReference>
<dbReference type="GO" id="GO:0005524">
    <property type="term" value="F:ATP binding"/>
    <property type="evidence" value="ECO:0007669"/>
    <property type="project" value="UniProtKB-KW"/>
</dbReference>
<dbReference type="GO" id="GO:0000049">
    <property type="term" value="F:tRNA binding"/>
    <property type="evidence" value="ECO:0007669"/>
    <property type="project" value="UniProtKB-KW"/>
</dbReference>
<dbReference type="GO" id="GO:0103016">
    <property type="term" value="F:tRNA-uridine 2-sulfurtransferase activity"/>
    <property type="evidence" value="ECO:0007669"/>
    <property type="project" value="UniProtKB-EC"/>
</dbReference>
<dbReference type="GO" id="GO:0002143">
    <property type="term" value="P:tRNA wobble position uridine thiolation"/>
    <property type="evidence" value="ECO:0007669"/>
    <property type="project" value="TreeGrafter"/>
</dbReference>
<dbReference type="CDD" id="cd01998">
    <property type="entry name" value="MnmA_TRMU-like"/>
    <property type="match status" value="1"/>
</dbReference>
<dbReference type="FunFam" id="2.30.30.280:FF:000001">
    <property type="entry name" value="tRNA-specific 2-thiouridylase MnmA"/>
    <property type="match status" value="1"/>
</dbReference>
<dbReference type="FunFam" id="2.40.30.10:FF:000023">
    <property type="entry name" value="tRNA-specific 2-thiouridylase MnmA"/>
    <property type="match status" value="1"/>
</dbReference>
<dbReference type="FunFam" id="3.40.50.620:FF:000115">
    <property type="entry name" value="tRNA-specific 2-thiouridylase MnmA"/>
    <property type="match status" value="1"/>
</dbReference>
<dbReference type="Gene3D" id="2.30.30.280">
    <property type="entry name" value="Adenine nucleotide alpha hydrolases-like domains"/>
    <property type="match status" value="1"/>
</dbReference>
<dbReference type="Gene3D" id="3.40.50.620">
    <property type="entry name" value="HUPs"/>
    <property type="match status" value="1"/>
</dbReference>
<dbReference type="Gene3D" id="2.40.30.10">
    <property type="entry name" value="Translation factors"/>
    <property type="match status" value="1"/>
</dbReference>
<dbReference type="HAMAP" id="MF_00144">
    <property type="entry name" value="tRNA_thiouridyl_MnmA"/>
    <property type="match status" value="1"/>
</dbReference>
<dbReference type="InterPro" id="IPR004506">
    <property type="entry name" value="MnmA-like"/>
</dbReference>
<dbReference type="InterPro" id="IPR046885">
    <property type="entry name" value="MnmA-like_C"/>
</dbReference>
<dbReference type="InterPro" id="IPR046884">
    <property type="entry name" value="MnmA-like_central"/>
</dbReference>
<dbReference type="InterPro" id="IPR023382">
    <property type="entry name" value="MnmA-like_central_sf"/>
</dbReference>
<dbReference type="InterPro" id="IPR014729">
    <property type="entry name" value="Rossmann-like_a/b/a_fold"/>
</dbReference>
<dbReference type="NCBIfam" id="NF001138">
    <property type="entry name" value="PRK00143.1"/>
    <property type="match status" value="1"/>
</dbReference>
<dbReference type="NCBIfam" id="TIGR00420">
    <property type="entry name" value="trmU"/>
    <property type="match status" value="1"/>
</dbReference>
<dbReference type="PANTHER" id="PTHR11933:SF5">
    <property type="entry name" value="MITOCHONDRIAL TRNA-SPECIFIC 2-THIOURIDYLASE 1"/>
    <property type="match status" value="1"/>
</dbReference>
<dbReference type="PANTHER" id="PTHR11933">
    <property type="entry name" value="TRNA 5-METHYLAMINOMETHYL-2-THIOURIDYLATE -METHYLTRANSFERASE"/>
    <property type="match status" value="1"/>
</dbReference>
<dbReference type="Pfam" id="PF03054">
    <property type="entry name" value="tRNA_Me_trans"/>
    <property type="match status" value="1"/>
</dbReference>
<dbReference type="Pfam" id="PF20258">
    <property type="entry name" value="tRNA_Me_trans_C"/>
    <property type="match status" value="1"/>
</dbReference>
<dbReference type="Pfam" id="PF20259">
    <property type="entry name" value="tRNA_Me_trans_M"/>
    <property type="match status" value="1"/>
</dbReference>
<dbReference type="SUPFAM" id="SSF52402">
    <property type="entry name" value="Adenine nucleotide alpha hydrolases-like"/>
    <property type="match status" value="1"/>
</dbReference>
<feature type="chain" id="PRO_0000349838" description="tRNA-specific 2-thiouridylase MnmA 1">
    <location>
        <begin position="1"/>
        <end position="364"/>
    </location>
</feature>
<feature type="region of interest" description="Interaction with tRNA" evidence="1">
    <location>
        <begin position="154"/>
        <end position="156"/>
    </location>
</feature>
<feature type="region of interest" description="Interaction with tRNA" evidence="1">
    <location>
        <begin position="310"/>
        <end position="311"/>
    </location>
</feature>
<feature type="active site" description="Nucleophile" evidence="1">
    <location>
        <position position="106"/>
    </location>
</feature>
<feature type="active site" description="Cysteine persulfide intermediate" evidence="1">
    <location>
        <position position="204"/>
    </location>
</feature>
<feature type="binding site" evidence="1">
    <location>
        <begin position="10"/>
        <end position="17"/>
    </location>
    <ligand>
        <name>ATP</name>
        <dbReference type="ChEBI" id="CHEBI:30616"/>
    </ligand>
</feature>
<feature type="binding site" evidence="1">
    <location>
        <position position="36"/>
    </location>
    <ligand>
        <name>ATP</name>
        <dbReference type="ChEBI" id="CHEBI:30616"/>
    </ligand>
</feature>
<feature type="binding site" evidence="1">
    <location>
        <position position="130"/>
    </location>
    <ligand>
        <name>ATP</name>
        <dbReference type="ChEBI" id="CHEBI:30616"/>
    </ligand>
</feature>
<feature type="site" description="Interaction with tRNA" evidence="1">
    <location>
        <position position="131"/>
    </location>
</feature>
<feature type="site" description="Interaction with tRNA" evidence="1">
    <location>
        <position position="343"/>
    </location>
</feature>
<feature type="disulfide bond" description="Alternate" evidence="1">
    <location>
        <begin position="106"/>
        <end position="204"/>
    </location>
</feature>